<organism>
    <name type="scientific">Desulfatibacillum aliphaticivorans</name>
    <dbReference type="NCBI Taxonomy" id="218208"/>
    <lineage>
        <taxon>Bacteria</taxon>
        <taxon>Pseudomonadati</taxon>
        <taxon>Thermodesulfobacteriota</taxon>
        <taxon>Desulfobacteria</taxon>
        <taxon>Desulfobacterales</taxon>
        <taxon>Desulfatibacillaceae</taxon>
        <taxon>Desulfatibacillum</taxon>
    </lineage>
</organism>
<evidence type="ECO:0000255" key="1">
    <source>
        <dbReference type="HAMAP-Rule" id="MF_00440"/>
    </source>
</evidence>
<proteinExistence type="inferred from homology"/>
<comment type="function">
    <text evidence="1">Negatively regulates transcription of bacterial ribonucleotide reductase nrd genes and operons by binding to NrdR-boxes.</text>
</comment>
<comment type="cofactor">
    <cofactor evidence="1">
        <name>Zn(2+)</name>
        <dbReference type="ChEBI" id="CHEBI:29105"/>
    </cofactor>
    <text evidence="1">Binds 1 zinc ion.</text>
</comment>
<comment type="similarity">
    <text evidence="1">Belongs to the NrdR family.</text>
</comment>
<keyword id="KW-0067">ATP-binding</keyword>
<keyword id="KW-0238">DNA-binding</keyword>
<keyword id="KW-0479">Metal-binding</keyword>
<keyword id="KW-0547">Nucleotide-binding</keyword>
<keyword id="KW-1185">Reference proteome</keyword>
<keyword id="KW-0678">Repressor</keyword>
<keyword id="KW-0804">Transcription</keyword>
<keyword id="KW-0805">Transcription regulation</keyword>
<keyword id="KW-0862">Zinc</keyword>
<keyword id="KW-0863">Zinc-finger</keyword>
<sequence length="156" mass="18340">MKCPYCGETEDKVIDSRQGKEADVIRRRRECLSCSRRFTTYEKVEDMPLVIIKKDGRREVFNGEKVRAGMLRACEKRNISVHVIDEFIEQLERDLRETGEKEVPSHQVGEAIMNKLHELDDVAYVRFASVYREFKHVNDFISELKYLLKQQQKGGK</sequence>
<reference key="1">
    <citation type="journal article" date="2012" name="Environ. Microbiol.">
        <title>The genome sequence of Desulfatibacillum alkenivorans AK-01: a blueprint for anaerobic alkane oxidation.</title>
        <authorList>
            <person name="Callaghan A.V."/>
            <person name="Morris B.E."/>
            <person name="Pereira I.A."/>
            <person name="McInerney M.J."/>
            <person name="Austin R.N."/>
            <person name="Groves J.T."/>
            <person name="Kukor J.J."/>
            <person name="Suflita J.M."/>
            <person name="Young L.Y."/>
            <person name="Zylstra G.J."/>
            <person name="Wawrik B."/>
        </authorList>
    </citation>
    <scope>NUCLEOTIDE SEQUENCE [LARGE SCALE GENOMIC DNA]</scope>
    <source>
        <strain>AK-01</strain>
    </source>
</reference>
<accession>B8FJ73</accession>
<name>NRDR_DESAL</name>
<gene>
    <name evidence="1" type="primary">nrdR</name>
    <name type="ordered locus">Dalk_3311</name>
</gene>
<feature type="chain" id="PRO_1000124494" description="Transcriptional repressor NrdR">
    <location>
        <begin position="1"/>
        <end position="156"/>
    </location>
</feature>
<feature type="domain" description="ATP-cone" evidence="1">
    <location>
        <begin position="49"/>
        <end position="139"/>
    </location>
</feature>
<feature type="zinc finger region" evidence="1">
    <location>
        <begin position="3"/>
        <end position="34"/>
    </location>
</feature>
<protein>
    <recommendedName>
        <fullName evidence="1">Transcriptional repressor NrdR</fullName>
    </recommendedName>
</protein>
<dbReference type="EMBL" id="CP001322">
    <property type="protein sequence ID" value="ACL05000.1"/>
    <property type="molecule type" value="Genomic_DNA"/>
</dbReference>
<dbReference type="RefSeq" id="WP_015948059.1">
    <property type="nucleotide sequence ID" value="NC_011768.1"/>
</dbReference>
<dbReference type="SMR" id="B8FJ73"/>
<dbReference type="KEGG" id="dal:Dalk_3311"/>
<dbReference type="eggNOG" id="COG1327">
    <property type="taxonomic scope" value="Bacteria"/>
</dbReference>
<dbReference type="HOGENOM" id="CLU_108412_0_0_7"/>
<dbReference type="Proteomes" id="UP000000739">
    <property type="component" value="Chromosome"/>
</dbReference>
<dbReference type="GO" id="GO:0005524">
    <property type="term" value="F:ATP binding"/>
    <property type="evidence" value="ECO:0007669"/>
    <property type="project" value="UniProtKB-KW"/>
</dbReference>
<dbReference type="GO" id="GO:0003677">
    <property type="term" value="F:DNA binding"/>
    <property type="evidence" value="ECO:0007669"/>
    <property type="project" value="UniProtKB-KW"/>
</dbReference>
<dbReference type="GO" id="GO:0008270">
    <property type="term" value="F:zinc ion binding"/>
    <property type="evidence" value="ECO:0007669"/>
    <property type="project" value="UniProtKB-UniRule"/>
</dbReference>
<dbReference type="GO" id="GO:0045892">
    <property type="term" value="P:negative regulation of DNA-templated transcription"/>
    <property type="evidence" value="ECO:0007669"/>
    <property type="project" value="UniProtKB-UniRule"/>
</dbReference>
<dbReference type="HAMAP" id="MF_00440">
    <property type="entry name" value="NrdR"/>
    <property type="match status" value="1"/>
</dbReference>
<dbReference type="InterPro" id="IPR005144">
    <property type="entry name" value="ATP-cone_dom"/>
</dbReference>
<dbReference type="InterPro" id="IPR055173">
    <property type="entry name" value="NrdR-like_N"/>
</dbReference>
<dbReference type="InterPro" id="IPR003796">
    <property type="entry name" value="RNR_NrdR-like"/>
</dbReference>
<dbReference type="NCBIfam" id="TIGR00244">
    <property type="entry name" value="transcriptional regulator NrdR"/>
    <property type="match status" value="1"/>
</dbReference>
<dbReference type="PANTHER" id="PTHR30455">
    <property type="entry name" value="TRANSCRIPTIONAL REPRESSOR NRDR"/>
    <property type="match status" value="1"/>
</dbReference>
<dbReference type="PANTHER" id="PTHR30455:SF2">
    <property type="entry name" value="TRANSCRIPTIONAL REPRESSOR NRDR"/>
    <property type="match status" value="1"/>
</dbReference>
<dbReference type="Pfam" id="PF03477">
    <property type="entry name" value="ATP-cone"/>
    <property type="match status" value="1"/>
</dbReference>
<dbReference type="Pfam" id="PF22811">
    <property type="entry name" value="Zn_ribbon_NrdR"/>
    <property type="match status" value="1"/>
</dbReference>
<dbReference type="PROSITE" id="PS51161">
    <property type="entry name" value="ATP_CONE"/>
    <property type="match status" value="1"/>
</dbReference>